<reference key="1">
    <citation type="submission" date="2009-02" db="EMBL/GenBank/DDBJ databases">
        <title>The genome sequence of Ajellomyces capsulatus strain G186AR.</title>
        <authorList>
            <person name="Champion M."/>
            <person name="Cuomo C.A."/>
            <person name="Ma L.-J."/>
            <person name="Henn M.R."/>
            <person name="Sil A."/>
            <person name="Goldman B."/>
            <person name="Young S.K."/>
            <person name="Kodira C.D."/>
            <person name="Zeng Q."/>
            <person name="Koehrsen M."/>
            <person name="Alvarado L."/>
            <person name="Berlin A."/>
            <person name="Borenstein D."/>
            <person name="Chen Z."/>
            <person name="Engels R."/>
            <person name="Freedman E."/>
            <person name="Gellesch M."/>
            <person name="Goldberg J."/>
            <person name="Griggs A."/>
            <person name="Gujja S."/>
            <person name="Heiman D."/>
            <person name="Hepburn T."/>
            <person name="Howarth C."/>
            <person name="Jen D."/>
            <person name="Larson L."/>
            <person name="Lewis B."/>
            <person name="Mehta T."/>
            <person name="Park D."/>
            <person name="Pearson M."/>
            <person name="Roberts A."/>
            <person name="Saif S."/>
            <person name="Shea T."/>
            <person name="Shenoy N."/>
            <person name="Sisk P."/>
            <person name="Stolte C."/>
            <person name="Sykes S."/>
            <person name="Walk T."/>
            <person name="White J."/>
            <person name="Yandava C."/>
            <person name="Klein B."/>
            <person name="McEwen J.G."/>
            <person name="Puccia R."/>
            <person name="Goldman G.H."/>
            <person name="Felipe M.S."/>
            <person name="Nino-Vega G."/>
            <person name="San-Blas G."/>
            <person name="Taylor J."/>
            <person name="Mendoza L."/>
            <person name="Galagan J.E."/>
            <person name="Nusbaum C."/>
            <person name="Birren B.W."/>
        </authorList>
    </citation>
    <scope>NUCLEOTIDE SEQUENCE [LARGE SCALE GENOMIC DNA]</scope>
    <source>
        <strain>G186AR / H82 / ATCC MYA-2454 / RMSCC 2432</strain>
    </source>
</reference>
<keyword id="KW-0472">Membrane</keyword>
<keyword id="KW-0496">Mitochondrion</keyword>
<keyword id="KW-0999">Mitochondrion inner membrane</keyword>
<keyword id="KW-1185">Reference proteome</keyword>
<keyword id="KW-0809">Transit peptide</keyword>
<feature type="transit peptide" description="Mitochondrion" evidence="2">
    <location>
        <begin position="1"/>
        <end position="52"/>
    </location>
</feature>
<feature type="chain" id="PRO_0000404454" description="ATPase synthesis protein 25, mitochondrial">
    <location>
        <begin position="53"/>
        <end position="731"/>
    </location>
</feature>
<feature type="region of interest" description="Disordered" evidence="3">
    <location>
        <begin position="61"/>
        <end position="93"/>
    </location>
</feature>
<feature type="region of interest" description="Disordered" evidence="3">
    <location>
        <begin position="356"/>
        <end position="396"/>
    </location>
</feature>
<feature type="compositionally biased region" description="Polar residues" evidence="3">
    <location>
        <begin position="356"/>
        <end position="378"/>
    </location>
</feature>
<evidence type="ECO:0000250" key="1"/>
<evidence type="ECO:0000255" key="2"/>
<evidence type="ECO:0000256" key="3">
    <source>
        <dbReference type="SAM" id="MobiDB-lite"/>
    </source>
</evidence>
<evidence type="ECO:0000305" key="4"/>
<proteinExistence type="inferred from homology"/>
<dbReference type="EMBL" id="GG663374">
    <property type="protein sequence ID" value="EEH04229.1"/>
    <property type="molecule type" value="Genomic_DNA"/>
</dbReference>
<dbReference type="SMR" id="C0NWC4"/>
<dbReference type="STRING" id="447093.C0NWC4"/>
<dbReference type="VEuPathDB" id="FungiDB:I7I50_07917"/>
<dbReference type="HOGENOM" id="CLU_016140_0_0_1"/>
<dbReference type="InParanoid" id="C0NWC4"/>
<dbReference type="Proteomes" id="UP000001631">
    <property type="component" value="Unassembled WGS sequence"/>
</dbReference>
<dbReference type="GO" id="GO:0005743">
    <property type="term" value="C:mitochondrial inner membrane"/>
    <property type="evidence" value="ECO:0007669"/>
    <property type="project" value="UniProtKB-SubCell"/>
</dbReference>
<dbReference type="GO" id="GO:0140053">
    <property type="term" value="P:mitochondrial gene expression"/>
    <property type="evidence" value="ECO:0007669"/>
    <property type="project" value="InterPro"/>
</dbReference>
<dbReference type="GO" id="GO:0048255">
    <property type="term" value="P:mRNA stabilization"/>
    <property type="evidence" value="ECO:0007669"/>
    <property type="project" value="TreeGrafter"/>
</dbReference>
<dbReference type="FunFam" id="3.30.460.10:FF:000044">
    <property type="entry name" value="ATPase synthesis protein 25, mitochondrial"/>
    <property type="match status" value="1"/>
</dbReference>
<dbReference type="Gene3D" id="3.30.460.10">
    <property type="entry name" value="Beta Polymerase, domain 2"/>
    <property type="match status" value="1"/>
</dbReference>
<dbReference type="InterPro" id="IPR040152">
    <property type="entry name" value="Atp25"/>
</dbReference>
<dbReference type="InterPro" id="IPR043519">
    <property type="entry name" value="NT_sf"/>
</dbReference>
<dbReference type="PANTHER" id="PTHR28087">
    <property type="entry name" value="ATPASE SYNTHESIS PROTEIN 25, MITOCHONDRIAL"/>
    <property type="match status" value="1"/>
</dbReference>
<dbReference type="PANTHER" id="PTHR28087:SF1">
    <property type="entry name" value="ATPASE SYNTHESIS PROTEIN 25, MITOCHONDRIAL"/>
    <property type="match status" value="1"/>
</dbReference>
<organism>
    <name type="scientific">Ajellomyces capsulatus (strain G186AR / H82 / ATCC MYA-2454 / RMSCC 2432)</name>
    <name type="common">Darling's disease fungus</name>
    <name type="synonym">Histoplasma capsulatum</name>
    <dbReference type="NCBI Taxonomy" id="447093"/>
    <lineage>
        <taxon>Eukaryota</taxon>
        <taxon>Fungi</taxon>
        <taxon>Dikarya</taxon>
        <taxon>Ascomycota</taxon>
        <taxon>Pezizomycotina</taxon>
        <taxon>Eurotiomycetes</taxon>
        <taxon>Eurotiomycetidae</taxon>
        <taxon>Onygenales</taxon>
        <taxon>Ajellomycetaceae</taxon>
        <taxon>Histoplasma</taxon>
    </lineage>
</organism>
<name>ATP25_AJECG</name>
<protein>
    <recommendedName>
        <fullName>ATPase synthesis protein 25, mitochondrial</fullName>
    </recommendedName>
</protein>
<sequence length="731" mass="81927">MSRVLLRGIQCHACRSNVIRSFISLSDVAITPLAGGSRSTAQARPPPLSRNFSSQHAKLFSNQPSDNAELSVDPIPEIHNGEEPEGQPEESQEHIPWYLKEEQVEETIPHPLRRQQPLPPLPENPPPILENLLEHISVDIGLDNLSLLDLRRLDPPPALGANLIMIFGTARGVKHLNVSADRLCRWLRTTYKLRPDADGLLGRNELKIKLRRKARRAKLAKSAKSTLTQPDDGITTGWICVDVGTVEGGQFRKPEEELRKVGFVGFGTVVEGTRIVVQMMTEEKREEIDLEGLWRQKLERNSLENEGLPQPQAAAPQEAGDIHEQLTIPPTNINHQISHATQISPNYEQRRGISTGSRYQDATSDTWGTSRISPNGETTHLEPSAPSSPTSLSHRFKNIPPHEAIYDLGQGTHDRCSTAFLQQFYQEVARAPSELASSRRIELMCIAIELHHPGYRKPDLFQAIQEHILSNYALTRAQFLQILDAFLSFKPDLTSNPPRLLLPNADMELALQIIDHAGLRGLNLLDSTILVKLFVGVSFRAQVYPVEQKDLPNSPVIGNRIPVPLNTCDAVKRVQSRLTRVKTAAKISFTAEQYMKILRVLFDQGSYSGFWNTWEDMALAGVARDKALYVFLFQLHAESDGWQCFTTQLLNCIPMMERENPPVHLDGELAEVTQKCITIAYPEIIDRVERNEQNPLVRMWHRCRVAIENAAAAGGRGQDSTAPYVCNHSDI</sequence>
<accession>C0NWC4</accession>
<comment type="function">
    <text evidence="1">Probable mitochondrial mRNA stabilization factor.</text>
</comment>
<comment type="subcellular location">
    <subcellularLocation>
        <location evidence="1">Mitochondrion inner membrane</location>
        <topology evidence="1">Peripheral membrane protein</topology>
        <orientation evidence="1">Matrix side</orientation>
    </subcellularLocation>
</comment>
<comment type="similarity">
    <text evidence="4">Belongs to the ATP25 family.</text>
</comment>
<gene>
    <name type="primary">ATP25</name>
    <name type="ORF">HCBG_07454</name>
</gene>